<sequence length="263" mass="28625">MKKIHPSAVIEEGAQLGDDVVVEAYAYVSKDAKIGNNVVIKQGARILSDTTIGDHSRVFSYAIVGDIPQDISYKEEQKSGVVIGKNATIREFATINSGTAKGDGFTRIGDNAFIMAYCHIAHDCLLGNNIILANNATLAGHVELGDFTVVGGLTPIHQFVKVGEGCMIAGASALSQDIVPFCLAEGNRASIRSLNLVGTRRRFDKDEVDRLSRAFKTLFRQGDLKENAKNLLENQESENVKKMCHFILETKRGIPVYRGKNNA</sequence>
<accession>Q5HWJ2</accession>
<dbReference type="EC" id="2.3.1.129" evidence="1"/>
<dbReference type="EMBL" id="CP000025">
    <property type="protein sequence ID" value="AAW34913.1"/>
    <property type="molecule type" value="Genomic_DNA"/>
</dbReference>
<dbReference type="RefSeq" id="WP_002859836.1">
    <property type="nucleotide sequence ID" value="NC_003912.7"/>
</dbReference>
<dbReference type="SMR" id="Q5HWJ2"/>
<dbReference type="KEGG" id="cjr:CJE0323"/>
<dbReference type="HOGENOM" id="CLU_061249_0_0_7"/>
<dbReference type="UniPathway" id="UPA00359">
    <property type="reaction ID" value="UER00477"/>
</dbReference>
<dbReference type="GO" id="GO:0005737">
    <property type="term" value="C:cytoplasm"/>
    <property type="evidence" value="ECO:0007669"/>
    <property type="project" value="UniProtKB-SubCell"/>
</dbReference>
<dbReference type="GO" id="GO:0016020">
    <property type="term" value="C:membrane"/>
    <property type="evidence" value="ECO:0007669"/>
    <property type="project" value="GOC"/>
</dbReference>
<dbReference type="GO" id="GO:0008780">
    <property type="term" value="F:acyl-[acyl-carrier-protein]-UDP-N-acetylglucosamine O-acyltransferase activity"/>
    <property type="evidence" value="ECO:0007669"/>
    <property type="project" value="UniProtKB-UniRule"/>
</dbReference>
<dbReference type="GO" id="GO:0009245">
    <property type="term" value="P:lipid A biosynthetic process"/>
    <property type="evidence" value="ECO:0007669"/>
    <property type="project" value="UniProtKB-UniRule"/>
</dbReference>
<dbReference type="CDD" id="cd03351">
    <property type="entry name" value="LbH_UDP-GlcNAc_AT"/>
    <property type="match status" value="1"/>
</dbReference>
<dbReference type="Gene3D" id="2.160.10.10">
    <property type="entry name" value="Hexapeptide repeat proteins"/>
    <property type="match status" value="1"/>
</dbReference>
<dbReference type="Gene3D" id="1.20.1180.10">
    <property type="entry name" value="Udp N-acetylglucosamine O-acyltransferase, C-terminal domain"/>
    <property type="match status" value="1"/>
</dbReference>
<dbReference type="HAMAP" id="MF_00387">
    <property type="entry name" value="LpxA"/>
    <property type="match status" value="1"/>
</dbReference>
<dbReference type="InterPro" id="IPR029098">
    <property type="entry name" value="Acetyltransf_C"/>
</dbReference>
<dbReference type="InterPro" id="IPR037157">
    <property type="entry name" value="Acetyltransf_C_sf"/>
</dbReference>
<dbReference type="InterPro" id="IPR001451">
    <property type="entry name" value="Hexapep"/>
</dbReference>
<dbReference type="InterPro" id="IPR018357">
    <property type="entry name" value="Hexapep_transf_CS"/>
</dbReference>
<dbReference type="InterPro" id="IPR010137">
    <property type="entry name" value="Lipid_A_LpxA"/>
</dbReference>
<dbReference type="InterPro" id="IPR011004">
    <property type="entry name" value="Trimer_LpxA-like_sf"/>
</dbReference>
<dbReference type="NCBIfam" id="TIGR01852">
    <property type="entry name" value="lipid_A_lpxA"/>
    <property type="match status" value="1"/>
</dbReference>
<dbReference type="NCBIfam" id="NF003657">
    <property type="entry name" value="PRK05289.1"/>
    <property type="match status" value="1"/>
</dbReference>
<dbReference type="PANTHER" id="PTHR43480">
    <property type="entry name" value="ACYL-[ACYL-CARRIER-PROTEIN]--UDP-N-ACETYLGLUCOSAMINE O-ACYLTRANSFERASE"/>
    <property type="match status" value="1"/>
</dbReference>
<dbReference type="PANTHER" id="PTHR43480:SF1">
    <property type="entry name" value="ACYL-[ACYL-CARRIER-PROTEIN]--UDP-N-ACETYLGLUCOSAMINE O-ACYLTRANSFERASE, MITOCHONDRIAL-RELATED"/>
    <property type="match status" value="1"/>
</dbReference>
<dbReference type="Pfam" id="PF13720">
    <property type="entry name" value="Acetyltransf_11"/>
    <property type="match status" value="1"/>
</dbReference>
<dbReference type="Pfam" id="PF00132">
    <property type="entry name" value="Hexapep"/>
    <property type="match status" value="1"/>
</dbReference>
<dbReference type="PIRSF" id="PIRSF000456">
    <property type="entry name" value="UDP-GlcNAc_acltr"/>
    <property type="match status" value="1"/>
</dbReference>
<dbReference type="SUPFAM" id="SSF51161">
    <property type="entry name" value="Trimeric LpxA-like enzymes"/>
    <property type="match status" value="1"/>
</dbReference>
<dbReference type="PROSITE" id="PS00101">
    <property type="entry name" value="HEXAPEP_TRANSFERASES"/>
    <property type="match status" value="1"/>
</dbReference>
<evidence type="ECO:0000255" key="1">
    <source>
        <dbReference type="HAMAP-Rule" id="MF_00387"/>
    </source>
</evidence>
<keyword id="KW-0012">Acyltransferase</keyword>
<keyword id="KW-0963">Cytoplasm</keyword>
<keyword id="KW-0441">Lipid A biosynthesis</keyword>
<keyword id="KW-0444">Lipid biosynthesis</keyword>
<keyword id="KW-0443">Lipid metabolism</keyword>
<keyword id="KW-0677">Repeat</keyword>
<keyword id="KW-0808">Transferase</keyword>
<protein>
    <recommendedName>
        <fullName evidence="1">Acyl-[acyl-carrier-protein]--UDP-N-acetylglucosamine O-acyltransferase</fullName>
        <shortName evidence="1">UDP-N-acetylglucosamine acyltransferase</shortName>
        <ecNumber evidence="1">2.3.1.129</ecNumber>
    </recommendedName>
</protein>
<gene>
    <name evidence="1" type="primary">lpxA</name>
    <name type="ordered locus">CJE0323</name>
</gene>
<organism>
    <name type="scientific">Campylobacter jejuni (strain RM1221)</name>
    <dbReference type="NCBI Taxonomy" id="195099"/>
    <lineage>
        <taxon>Bacteria</taxon>
        <taxon>Pseudomonadati</taxon>
        <taxon>Campylobacterota</taxon>
        <taxon>Epsilonproteobacteria</taxon>
        <taxon>Campylobacterales</taxon>
        <taxon>Campylobacteraceae</taxon>
        <taxon>Campylobacter</taxon>
    </lineage>
</organism>
<comment type="function">
    <text evidence="1">Involved in the biosynthesis of lipid A, a phosphorylated glycolipid that anchors the lipopolysaccharide to the outer membrane of the cell.</text>
</comment>
<comment type="catalytic activity">
    <reaction evidence="1">
        <text>a (3R)-hydroxyacyl-[ACP] + UDP-N-acetyl-alpha-D-glucosamine = a UDP-3-O-[(3R)-3-hydroxyacyl]-N-acetyl-alpha-D-glucosamine + holo-[ACP]</text>
        <dbReference type="Rhea" id="RHEA:67812"/>
        <dbReference type="Rhea" id="RHEA-COMP:9685"/>
        <dbReference type="Rhea" id="RHEA-COMP:9945"/>
        <dbReference type="ChEBI" id="CHEBI:57705"/>
        <dbReference type="ChEBI" id="CHEBI:64479"/>
        <dbReference type="ChEBI" id="CHEBI:78827"/>
        <dbReference type="ChEBI" id="CHEBI:173225"/>
        <dbReference type="EC" id="2.3.1.129"/>
    </reaction>
</comment>
<comment type="pathway">
    <text evidence="1">Glycolipid biosynthesis; lipid IV(A) biosynthesis; lipid IV(A) from (3R)-3-hydroxytetradecanoyl-[acyl-carrier-protein] and UDP-N-acetyl-alpha-D-glucosamine: step 1/6.</text>
</comment>
<comment type="subunit">
    <text evidence="1">Homotrimer.</text>
</comment>
<comment type="subcellular location">
    <subcellularLocation>
        <location evidence="1">Cytoplasm</location>
    </subcellularLocation>
</comment>
<comment type="similarity">
    <text evidence="1">Belongs to the transferase hexapeptide repeat family. LpxA subfamily.</text>
</comment>
<feature type="chain" id="PRO_0000302566" description="Acyl-[acyl-carrier-protein]--UDP-N-acetylglucosamine O-acyltransferase">
    <location>
        <begin position="1"/>
        <end position="263"/>
    </location>
</feature>
<name>LPXA_CAMJR</name>
<proteinExistence type="inferred from homology"/>
<reference key="1">
    <citation type="journal article" date="2005" name="PLoS Biol.">
        <title>Major structural differences and novel potential virulence mechanisms from the genomes of multiple Campylobacter species.</title>
        <authorList>
            <person name="Fouts D.E."/>
            <person name="Mongodin E.F."/>
            <person name="Mandrell R.E."/>
            <person name="Miller W.G."/>
            <person name="Rasko D.A."/>
            <person name="Ravel J."/>
            <person name="Brinkac L.M."/>
            <person name="DeBoy R.T."/>
            <person name="Parker C.T."/>
            <person name="Daugherty S.C."/>
            <person name="Dodson R.J."/>
            <person name="Durkin A.S."/>
            <person name="Madupu R."/>
            <person name="Sullivan S.A."/>
            <person name="Shetty J.U."/>
            <person name="Ayodeji M.A."/>
            <person name="Shvartsbeyn A."/>
            <person name="Schatz M.C."/>
            <person name="Badger J.H."/>
            <person name="Fraser C.M."/>
            <person name="Nelson K.E."/>
        </authorList>
    </citation>
    <scope>NUCLEOTIDE SEQUENCE [LARGE SCALE GENOMIC DNA]</scope>
    <source>
        <strain>RM1221</strain>
    </source>
</reference>